<name>NRH2_ORYSJ</name>
<organism>
    <name type="scientific">Oryza sativa subsp. japonica</name>
    <name type="common">Rice</name>
    <dbReference type="NCBI Taxonomy" id="39947"/>
    <lineage>
        <taxon>Eukaryota</taxon>
        <taxon>Viridiplantae</taxon>
        <taxon>Streptophyta</taxon>
        <taxon>Embryophyta</taxon>
        <taxon>Tracheophyta</taxon>
        <taxon>Spermatophyta</taxon>
        <taxon>Magnoliopsida</taxon>
        <taxon>Liliopsida</taxon>
        <taxon>Poales</taxon>
        <taxon>Poaceae</taxon>
        <taxon>BOP clade</taxon>
        <taxon>Oryzoideae</taxon>
        <taxon>Oryzeae</taxon>
        <taxon>Oryzinae</taxon>
        <taxon>Oryza</taxon>
        <taxon>Oryza sativa</taxon>
    </lineage>
</organism>
<protein>
    <recommendedName>
        <fullName evidence="6">NRR repressor homolog 2</fullName>
    </recommendedName>
</protein>
<sequence>MEARLSTGEKTKKMATTSRPSSPLPPEEETAAETTTSEEEEQQQMERFYALVANVRALRAMFKEAALPSCREDDVSGGGGGEQRQKRPRAAPWRPAFEMAVFECGGGGGTTTDDIEAATTKGQDGNCKKGKRSEANAAAEEDKGEVIEGKPVAIAIVADGPGKSTTMPDSN</sequence>
<gene>
    <name evidence="5" type="primary">RH2</name>
    <name evidence="8" type="ordered locus">Os01g0508500</name>
    <name evidence="6" type="ordered locus">LOC_Os01g32460</name>
    <name evidence="9" type="ORF">OsJ_01957</name>
    <name evidence="7" type="ORF">P0455H03.9</name>
</gene>
<feature type="chain" id="PRO_0000437010" description="NRR repressor homolog 2">
    <location>
        <begin position="1"/>
        <end position="171"/>
    </location>
</feature>
<feature type="region of interest" description="Disordered" evidence="2">
    <location>
        <begin position="1"/>
        <end position="45"/>
    </location>
</feature>
<feature type="region of interest" description="Disordered" evidence="2">
    <location>
        <begin position="65"/>
        <end position="94"/>
    </location>
</feature>
<feature type="region of interest" description="Disordered" evidence="2">
    <location>
        <begin position="119"/>
        <end position="143"/>
    </location>
</feature>
<feature type="compositionally biased region" description="Basic and acidic residues" evidence="2">
    <location>
        <begin position="1"/>
        <end position="12"/>
    </location>
</feature>
<feature type="compositionally biased region" description="Acidic residues" evidence="2">
    <location>
        <begin position="26"/>
        <end position="43"/>
    </location>
</feature>
<feature type="mutagenesis site" description="Strongly increases NPR1/NH1 binding efficiency and repression of NPR1/NH1-mediated transcriptional activation of LG2." evidence="3">
    <original>AV</original>
    <variation>ED</variation>
    <location>
        <begin position="100"/>
        <end position="101"/>
    </location>
</feature>
<dbReference type="EMBL" id="AP003435">
    <property type="protein sequence ID" value="BAD73539.1"/>
    <property type="molecule type" value="Genomic_DNA"/>
</dbReference>
<dbReference type="EMBL" id="AP008207">
    <property type="protein sequence ID" value="BAF05073.1"/>
    <property type="molecule type" value="Genomic_DNA"/>
</dbReference>
<dbReference type="EMBL" id="AP014957">
    <property type="protein sequence ID" value="BAS72363.1"/>
    <property type="molecule type" value="Genomic_DNA"/>
</dbReference>
<dbReference type="EMBL" id="CM000138">
    <property type="protein sequence ID" value="EEE54666.1"/>
    <property type="molecule type" value="Genomic_DNA"/>
</dbReference>
<dbReference type="EMBL" id="AK120501">
    <property type="protein sequence ID" value="BAH00041.1"/>
    <property type="molecule type" value="mRNA"/>
</dbReference>
<dbReference type="RefSeq" id="XP_015633794.1">
    <property type="nucleotide sequence ID" value="XM_015778308.1"/>
</dbReference>
<dbReference type="FunCoup" id="Q5QM06">
    <property type="interactions" value="266"/>
</dbReference>
<dbReference type="PaxDb" id="39947-Q5QM06"/>
<dbReference type="EnsemblPlants" id="Os01t0508500-01">
    <property type="protein sequence ID" value="Os01t0508500-01"/>
    <property type="gene ID" value="Os01g0508500"/>
</dbReference>
<dbReference type="Gramene" id="Os01t0508500-01">
    <property type="protein sequence ID" value="Os01t0508500-01"/>
    <property type="gene ID" value="Os01g0508500"/>
</dbReference>
<dbReference type="KEGG" id="dosa:Os01g0508500"/>
<dbReference type="HOGENOM" id="CLU_1654937_0_0_1"/>
<dbReference type="InParanoid" id="Q5QM06"/>
<dbReference type="OMA" id="MAVFECR"/>
<dbReference type="OrthoDB" id="693542at2759"/>
<dbReference type="Proteomes" id="UP000000763">
    <property type="component" value="Chromosome 1"/>
</dbReference>
<dbReference type="Proteomes" id="UP000007752">
    <property type="component" value="Chromosome 1"/>
</dbReference>
<dbReference type="Proteomes" id="UP000059680">
    <property type="component" value="Chromosome 1"/>
</dbReference>
<dbReference type="GO" id="GO:0005634">
    <property type="term" value="C:nucleus"/>
    <property type="evidence" value="ECO:0007669"/>
    <property type="project" value="UniProtKB-SubCell"/>
</dbReference>
<dbReference type="GO" id="GO:0006952">
    <property type="term" value="P:defense response"/>
    <property type="evidence" value="ECO:0007669"/>
    <property type="project" value="UniProtKB-KW"/>
</dbReference>
<dbReference type="GO" id="GO:0010112">
    <property type="term" value="P:regulation of systemic acquired resistance"/>
    <property type="evidence" value="ECO:0007669"/>
    <property type="project" value="InterPro"/>
</dbReference>
<dbReference type="InterPro" id="IPR031425">
    <property type="entry name" value="NPR1/NH1-interacting"/>
</dbReference>
<dbReference type="PANTHER" id="PTHR33669:SF4">
    <property type="entry name" value="NRR REPRESSOR HOMOLOG 2"/>
    <property type="match status" value="1"/>
</dbReference>
<dbReference type="PANTHER" id="PTHR33669">
    <property type="entry name" value="PROTEIN NEGATIVE REGULATOR OF RESISTANCE"/>
    <property type="match status" value="1"/>
</dbReference>
<dbReference type="Pfam" id="PF15699">
    <property type="entry name" value="NPR1_interact"/>
    <property type="match status" value="1"/>
</dbReference>
<evidence type="ECO:0000250" key="1">
    <source>
        <dbReference type="UniProtKB" id="Q5ZEF1"/>
    </source>
</evidence>
<evidence type="ECO:0000256" key="2">
    <source>
        <dbReference type="SAM" id="MobiDB-lite"/>
    </source>
</evidence>
<evidence type="ECO:0000269" key="3">
    <source>
    </source>
</evidence>
<evidence type="ECO:0000269" key="4">
    <source>
    </source>
</evidence>
<evidence type="ECO:0000303" key="5">
    <source>
    </source>
</evidence>
<evidence type="ECO:0000305" key="6"/>
<evidence type="ECO:0000312" key="7">
    <source>
        <dbReference type="EMBL" id="BAD73539.1"/>
    </source>
</evidence>
<evidence type="ECO:0000312" key="8">
    <source>
        <dbReference type="EMBL" id="BAF05073.1"/>
    </source>
</evidence>
<evidence type="ECO:0000312" key="9">
    <source>
        <dbReference type="EMBL" id="EEE54666.1"/>
    </source>
</evidence>
<accession>Q5QM06</accession>
<comment type="function">
    <text evidence="3">Binds to and weakly represses NPR1/NH1-mediated transcriptional activation of LG2 in vitro.</text>
</comment>
<comment type="subunit">
    <text evidence="3 4">Interacts with NPR1/NH1 (PubMed:22353606, PubMed:24919709). Interacts with NPR3/NH3 (PubMed:24919709).</text>
</comment>
<comment type="subcellular location">
    <subcellularLocation>
        <location evidence="1">Nucleus</location>
    </subcellularLocation>
</comment>
<comment type="similarity">
    <text>Belongs to the NPR1-interactor family.</text>
</comment>
<reference key="1">
    <citation type="journal article" date="2002" name="Nature">
        <title>The genome sequence and structure of rice chromosome 1.</title>
        <authorList>
            <person name="Sasaki T."/>
            <person name="Matsumoto T."/>
            <person name="Yamamoto K."/>
            <person name="Sakata K."/>
            <person name="Baba T."/>
            <person name="Katayose Y."/>
            <person name="Wu J."/>
            <person name="Niimura Y."/>
            <person name="Cheng Z."/>
            <person name="Nagamura Y."/>
            <person name="Antonio B.A."/>
            <person name="Kanamori H."/>
            <person name="Hosokawa S."/>
            <person name="Masukawa M."/>
            <person name="Arikawa K."/>
            <person name="Chiden Y."/>
            <person name="Hayashi M."/>
            <person name="Okamoto M."/>
            <person name="Ando T."/>
            <person name="Aoki H."/>
            <person name="Arita K."/>
            <person name="Hamada M."/>
            <person name="Harada C."/>
            <person name="Hijishita S."/>
            <person name="Honda M."/>
            <person name="Ichikawa Y."/>
            <person name="Idonuma A."/>
            <person name="Iijima M."/>
            <person name="Ikeda M."/>
            <person name="Ikeno M."/>
            <person name="Ito S."/>
            <person name="Ito T."/>
            <person name="Ito Y."/>
            <person name="Ito Y."/>
            <person name="Iwabuchi A."/>
            <person name="Kamiya K."/>
            <person name="Karasawa W."/>
            <person name="Katagiri S."/>
            <person name="Kikuta A."/>
            <person name="Kobayashi N."/>
            <person name="Kono I."/>
            <person name="Machita K."/>
            <person name="Maehara T."/>
            <person name="Mizuno H."/>
            <person name="Mizubayashi T."/>
            <person name="Mukai Y."/>
            <person name="Nagasaki H."/>
            <person name="Nakashima M."/>
            <person name="Nakama Y."/>
            <person name="Nakamichi Y."/>
            <person name="Nakamura M."/>
            <person name="Namiki N."/>
            <person name="Negishi M."/>
            <person name="Ohta I."/>
            <person name="Ono N."/>
            <person name="Saji S."/>
            <person name="Sakai K."/>
            <person name="Shibata M."/>
            <person name="Shimokawa T."/>
            <person name="Shomura A."/>
            <person name="Song J."/>
            <person name="Takazaki Y."/>
            <person name="Terasawa K."/>
            <person name="Tsuji K."/>
            <person name="Waki K."/>
            <person name="Yamagata H."/>
            <person name="Yamane H."/>
            <person name="Yoshiki S."/>
            <person name="Yoshihara R."/>
            <person name="Yukawa K."/>
            <person name="Zhong H."/>
            <person name="Iwama H."/>
            <person name="Endo T."/>
            <person name="Ito H."/>
            <person name="Hahn J.H."/>
            <person name="Kim H.-I."/>
            <person name="Eun M.-Y."/>
            <person name="Yano M."/>
            <person name="Jiang J."/>
            <person name="Gojobori T."/>
        </authorList>
    </citation>
    <scope>NUCLEOTIDE SEQUENCE [LARGE SCALE GENOMIC DNA]</scope>
    <source>
        <strain>cv. Nipponbare</strain>
    </source>
</reference>
<reference key="2">
    <citation type="journal article" date="2005" name="Nature">
        <title>The map-based sequence of the rice genome.</title>
        <authorList>
            <consortium name="International rice genome sequencing project (IRGSP)"/>
        </authorList>
    </citation>
    <scope>NUCLEOTIDE SEQUENCE [LARGE SCALE GENOMIC DNA]</scope>
    <source>
        <strain>cv. Nipponbare</strain>
    </source>
</reference>
<reference key="3">
    <citation type="journal article" date="2008" name="Nucleic Acids Res.">
        <title>The rice annotation project database (RAP-DB): 2008 update.</title>
        <authorList>
            <consortium name="The rice annotation project (RAP)"/>
        </authorList>
    </citation>
    <scope>GENOME REANNOTATION</scope>
    <source>
        <strain>cv. Nipponbare</strain>
    </source>
</reference>
<reference key="4">
    <citation type="journal article" date="2013" name="Rice">
        <title>Improvement of the Oryza sativa Nipponbare reference genome using next generation sequence and optical map data.</title>
        <authorList>
            <person name="Kawahara Y."/>
            <person name="de la Bastide M."/>
            <person name="Hamilton J.P."/>
            <person name="Kanamori H."/>
            <person name="McCombie W.R."/>
            <person name="Ouyang S."/>
            <person name="Schwartz D.C."/>
            <person name="Tanaka T."/>
            <person name="Wu J."/>
            <person name="Zhou S."/>
            <person name="Childs K.L."/>
            <person name="Davidson R.M."/>
            <person name="Lin H."/>
            <person name="Quesada-Ocampo L."/>
            <person name="Vaillancourt B."/>
            <person name="Sakai H."/>
            <person name="Lee S.S."/>
            <person name="Kim J."/>
            <person name="Numa H."/>
            <person name="Itoh T."/>
            <person name="Buell C.R."/>
            <person name="Matsumoto T."/>
        </authorList>
    </citation>
    <scope>GENOME REANNOTATION</scope>
    <source>
        <strain>cv. Nipponbare</strain>
    </source>
</reference>
<reference key="5">
    <citation type="journal article" date="2005" name="PLoS Biol.">
        <title>The genomes of Oryza sativa: a history of duplications.</title>
        <authorList>
            <person name="Yu J."/>
            <person name="Wang J."/>
            <person name="Lin W."/>
            <person name="Li S."/>
            <person name="Li H."/>
            <person name="Zhou J."/>
            <person name="Ni P."/>
            <person name="Dong W."/>
            <person name="Hu S."/>
            <person name="Zeng C."/>
            <person name="Zhang J."/>
            <person name="Zhang Y."/>
            <person name="Li R."/>
            <person name="Xu Z."/>
            <person name="Li S."/>
            <person name="Li X."/>
            <person name="Zheng H."/>
            <person name="Cong L."/>
            <person name="Lin L."/>
            <person name="Yin J."/>
            <person name="Geng J."/>
            <person name="Li G."/>
            <person name="Shi J."/>
            <person name="Liu J."/>
            <person name="Lv H."/>
            <person name="Li J."/>
            <person name="Wang J."/>
            <person name="Deng Y."/>
            <person name="Ran L."/>
            <person name="Shi X."/>
            <person name="Wang X."/>
            <person name="Wu Q."/>
            <person name="Li C."/>
            <person name="Ren X."/>
            <person name="Wang J."/>
            <person name="Wang X."/>
            <person name="Li D."/>
            <person name="Liu D."/>
            <person name="Zhang X."/>
            <person name="Ji Z."/>
            <person name="Zhao W."/>
            <person name="Sun Y."/>
            <person name="Zhang Z."/>
            <person name="Bao J."/>
            <person name="Han Y."/>
            <person name="Dong L."/>
            <person name="Ji J."/>
            <person name="Chen P."/>
            <person name="Wu S."/>
            <person name="Liu J."/>
            <person name="Xiao Y."/>
            <person name="Bu D."/>
            <person name="Tan J."/>
            <person name="Yang L."/>
            <person name="Ye C."/>
            <person name="Zhang J."/>
            <person name="Xu J."/>
            <person name="Zhou Y."/>
            <person name="Yu Y."/>
            <person name="Zhang B."/>
            <person name="Zhuang S."/>
            <person name="Wei H."/>
            <person name="Liu B."/>
            <person name="Lei M."/>
            <person name="Yu H."/>
            <person name="Li Y."/>
            <person name="Xu H."/>
            <person name="Wei S."/>
            <person name="He X."/>
            <person name="Fang L."/>
            <person name="Zhang Z."/>
            <person name="Zhang Y."/>
            <person name="Huang X."/>
            <person name="Su Z."/>
            <person name="Tong W."/>
            <person name="Li J."/>
            <person name="Tong Z."/>
            <person name="Li S."/>
            <person name="Ye J."/>
            <person name="Wang L."/>
            <person name="Fang L."/>
            <person name="Lei T."/>
            <person name="Chen C.-S."/>
            <person name="Chen H.-C."/>
            <person name="Xu Z."/>
            <person name="Li H."/>
            <person name="Huang H."/>
            <person name="Zhang F."/>
            <person name="Xu H."/>
            <person name="Li N."/>
            <person name="Zhao C."/>
            <person name="Li S."/>
            <person name="Dong L."/>
            <person name="Huang Y."/>
            <person name="Li L."/>
            <person name="Xi Y."/>
            <person name="Qi Q."/>
            <person name="Li W."/>
            <person name="Zhang B."/>
            <person name="Hu W."/>
            <person name="Zhang Y."/>
            <person name="Tian X."/>
            <person name="Jiao Y."/>
            <person name="Liang X."/>
            <person name="Jin J."/>
            <person name="Gao L."/>
            <person name="Zheng W."/>
            <person name="Hao B."/>
            <person name="Liu S.-M."/>
            <person name="Wang W."/>
            <person name="Yuan L."/>
            <person name="Cao M."/>
            <person name="McDermott J."/>
            <person name="Samudrala R."/>
            <person name="Wang J."/>
            <person name="Wong G.K.-S."/>
            <person name="Yang H."/>
        </authorList>
    </citation>
    <scope>NUCLEOTIDE SEQUENCE [LARGE SCALE GENOMIC DNA]</scope>
    <source>
        <strain>cv. Nipponbare</strain>
    </source>
</reference>
<reference key="6">
    <citation type="journal article" date="2003" name="Science">
        <title>Collection, mapping, and annotation of over 28,000 cDNA clones from japonica rice.</title>
        <authorList>
            <consortium name="The rice full-length cDNA consortium"/>
        </authorList>
    </citation>
    <scope>NUCLEOTIDE SEQUENCE [LARGE SCALE MRNA]</scope>
    <source>
        <strain>cv. Nipponbare</strain>
    </source>
</reference>
<reference key="7">
    <citation type="journal article" date="2012" name="Plant Methods">
        <title>A rice transient assay system identifies a novel domain in NRR required for interaction with NH1/OsNPR1 and inhibition of NH1-mediated transcriptional activation.</title>
        <authorList>
            <person name="Chern M."/>
            <person name="Bai W."/>
            <person name="Sze-To W.H."/>
            <person name="Canlas P.E."/>
            <person name="Bartley L.E."/>
            <person name="Ronald P.C."/>
        </authorList>
    </citation>
    <scope>FUNCTION</scope>
    <scope>INTERACTION WITH NPR1/NH1</scope>
    <scope>MUTAGENESIS OF 100-A-V-101</scope>
</reference>
<reference key="8">
    <citation type="journal article" date="2014" name="BMC Genomics">
        <title>Interaction specificity and coexpression of rice NPR1 homologs 1 and 3 (NH1 and NH3), TGA transcription factors and negative regulator of resistance (NRR) proteins.</title>
        <authorList>
            <person name="Chern M."/>
            <person name="Bai W."/>
            <person name="Ruan D."/>
            <person name="Oh T."/>
            <person name="Chen X."/>
            <person name="Ronald P.C."/>
        </authorList>
    </citation>
    <scope>INTERACTION WITH NPR1/NH1 AND NPR3/NH3</scope>
</reference>
<keyword id="KW-0539">Nucleus</keyword>
<keyword id="KW-0611">Plant defense</keyword>
<keyword id="KW-1185">Reference proteome</keyword>
<proteinExistence type="evidence at protein level"/>